<keyword id="KW-0067">ATP-binding</keyword>
<keyword id="KW-0418">Kinase</keyword>
<keyword id="KW-0547">Nucleotide-binding</keyword>
<keyword id="KW-1185">Reference proteome</keyword>
<keyword id="KW-0723">Serine/threonine-protein kinase</keyword>
<keyword id="KW-0808">Transferase</keyword>
<accession>Q0D847</accession>
<accession>B7ER38</accession>
<accession>Q8H4Y8</accession>
<comment type="catalytic activity">
    <reaction>
        <text>L-seryl-[protein] + ATP = O-phospho-L-seryl-[protein] + ADP + H(+)</text>
        <dbReference type="Rhea" id="RHEA:17989"/>
        <dbReference type="Rhea" id="RHEA-COMP:9863"/>
        <dbReference type="Rhea" id="RHEA-COMP:11604"/>
        <dbReference type="ChEBI" id="CHEBI:15378"/>
        <dbReference type="ChEBI" id="CHEBI:29999"/>
        <dbReference type="ChEBI" id="CHEBI:30616"/>
        <dbReference type="ChEBI" id="CHEBI:83421"/>
        <dbReference type="ChEBI" id="CHEBI:456216"/>
        <dbReference type="EC" id="2.7.11.1"/>
    </reaction>
</comment>
<comment type="catalytic activity">
    <reaction>
        <text>L-threonyl-[protein] + ATP = O-phospho-L-threonyl-[protein] + ADP + H(+)</text>
        <dbReference type="Rhea" id="RHEA:46608"/>
        <dbReference type="Rhea" id="RHEA-COMP:11060"/>
        <dbReference type="Rhea" id="RHEA-COMP:11605"/>
        <dbReference type="ChEBI" id="CHEBI:15378"/>
        <dbReference type="ChEBI" id="CHEBI:30013"/>
        <dbReference type="ChEBI" id="CHEBI:30616"/>
        <dbReference type="ChEBI" id="CHEBI:61977"/>
        <dbReference type="ChEBI" id="CHEBI:456216"/>
        <dbReference type="EC" id="2.7.11.1"/>
    </reaction>
</comment>
<comment type="similarity">
    <text evidence="3">Belongs to the protein kinase superfamily. Ser/Thr protein kinase family. WNK subfamily.</text>
</comment>
<comment type="caution">
    <text evidence="1">Was named WNK/'with no lysine(K)' because key residues for catalysis, including the lysine involved in ATP binding, are either not conserved or differ compared to the residues described in other kinase family proteins.</text>
</comment>
<comment type="sequence caution" evidence="5">
    <conflict type="erroneous initiation">
        <sequence resource="EMBL-CDS" id="BAC24889"/>
    </conflict>
</comment>
<dbReference type="EC" id="2.7.11.1"/>
<dbReference type="EMBL" id="AP003861">
    <property type="protein sequence ID" value="BAC24889.1"/>
    <property type="status" value="ALT_INIT"/>
    <property type="molecule type" value="Genomic_DNA"/>
</dbReference>
<dbReference type="EMBL" id="AP008213">
    <property type="protein sequence ID" value="BAF20976.1"/>
    <property type="molecule type" value="Genomic_DNA"/>
</dbReference>
<dbReference type="EMBL" id="AP014963">
    <property type="protein sequence ID" value="BAT00359.1"/>
    <property type="molecule type" value="Genomic_DNA"/>
</dbReference>
<dbReference type="EMBL" id="AK100930">
    <property type="protein sequence ID" value="BAG94835.1"/>
    <property type="molecule type" value="mRNA"/>
</dbReference>
<dbReference type="RefSeq" id="XP_015646740.1">
    <property type="nucleotide sequence ID" value="XM_015791254.1"/>
</dbReference>
<dbReference type="SMR" id="Q0D847"/>
<dbReference type="FunCoup" id="Q0D847">
    <property type="interactions" value="1156"/>
</dbReference>
<dbReference type="STRING" id="39947.Q0D847"/>
<dbReference type="PaxDb" id="39947-Q0D847"/>
<dbReference type="EnsemblPlants" id="Os07t0185000-01">
    <property type="protein sequence ID" value="Os07t0185000-01"/>
    <property type="gene ID" value="Os07g0185000"/>
</dbReference>
<dbReference type="Gramene" id="Os07t0185000-01">
    <property type="protein sequence ID" value="Os07t0185000-01"/>
    <property type="gene ID" value="Os07g0185000"/>
</dbReference>
<dbReference type="KEGG" id="dosa:Os07g0185000"/>
<dbReference type="eggNOG" id="KOG0584">
    <property type="taxonomic scope" value="Eukaryota"/>
</dbReference>
<dbReference type="HOGENOM" id="CLU_000288_142_2_1"/>
<dbReference type="InParanoid" id="Q0D847"/>
<dbReference type="OMA" id="CKNCRPA"/>
<dbReference type="OrthoDB" id="4062651at2759"/>
<dbReference type="Proteomes" id="UP000000763">
    <property type="component" value="Chromosome 7"/>
</dbReference>
<dbReference type="Proteomes" id="UP000059680">
    <property type="component" value="Chromosome 7"/>
</dbReference>
<dbReference type="ExpressionAtlas" id="Q0D847">
    <property type="expression patterns" value="baseline and differential"/>
</dbReference>
<dbReference type="GO" id="GO:0005737">
    <property type="term" value="C:cytoplasm"/>
    <property type="evidence" value="ECO:0000318"/>
    <property type="project" value="GO_Central"/>
</dbReference>
<dbReference type="GO" id="GO:0005524">
    <property type="term" value="F:ATP binding"/>
    <property type="evidence" value="ECO:0007669"/>
    <property type="project" value="UniProtKB-KW"/>
</dbReference>
<dbReference type="GO" id="GO:0106310">
    <property type="term" value="F:protein serine kinase activity"/>
    <property type="evidence" value="ECO:0007669"/>
    <property type="project" value="RHEA"/>
</dbReference>
<dbReference type="GO" id="GO:0004674">
    <property type="term" value="F:protein serine/threonine kinase activity"/>
    <property type="evidence" value="ECO:0000318"/>
    <property type="project" value="GO_Central"/>
</dbReference>
<dbReference type="GO" id="GO:0035556">
    <property type="term" value="P:intracellular signal transduction"/>
    <property type="evidence" value="ECO:0000318"/>
    <property type="project" value="GO_Central"/>
</dbReference>
<dbReference type="FunFam" id="3.30.200.20:FF:000075">
    <property type="entry name" value="Probable serine/threonine-protein kinase WNK1"/>
    <property type="match status" value="1"/>
</dbReference>
<dbReference type="FunFam" id="1.10.510.10:FF:000046">
    <property type="entry name" value="probable serine/threonine-protein kinase WNK9"/>
    <property type="match status" value="1"/>
</dbReference>
<dbReference type="Gene3D" id="3.30.200.20">
    <property type="entry name" value="Phosphorylase Kinase, domain 1"/>
    <property type="match status" value="1"/>
</dbReference>
<dbReference type="Gene3D" id="1.10.510.10">
    <property type="entry name" value="Transferase(Phosphotransferase) domain 1"/>
    <property type="match status" value="1"/>
</dbReference>
<dbReference type="InterPro" id="IPR011009">
    <property type="entry name" value="Kinase-like_dom_sf"/>
</dbReference>
<dbReference type="InterPro" id="IPR000719">
    <property type="entry name" value="Prot_kinase_dom"/>
</dbReference>
<dbReference type="InterPro" id="IPR008271">
    <property type="entry name" value="Ser/Thr_kinase_AS"/>
</dbReference>
<dbReference type="InterPro" id="IPR050588">
    <property type="entry name" value="WNK_Ser-Thr_kinase"/>
</dbReference>
<dbReference type="PANTHER" id="PTHR13902">
    <property type="entry name" value="SERINE/THREONINE-PROTEIN KINASE WNK WITH NO LYSINE -RELATED"/>
    <property type="match status" value="1"/>
</dbReference>
<dbReference type="Pfam" id="PF00069">
    <property type="entry name" value="Pkinase"/>
    <property type="match status" value="1"/>
</dbReference>
<dbReference type="SMART" id="SM00220">
    <property type="entry name" value="S_TKc"/>
    <property type="match status" value="1"/>
</dbReference>
<dbReference type="SUPFAM" id="SSF56112">
    <property type="entry name" value="Protein kinase-like (PK-like)"/>
    <property type="match status" value="1"/>
</dbReference>
<dbReference type="PROSITE" id="PS50011">
    <property type="entry name" value="PROTEIN_KINASE_DOM"/>
    <property type="match status" value="1"/>
</dbReference>
<dbReference type="PROSITE" id="PS00108">
    <property type="entry name" value="PROTEIN_KINASE_ST"/>
    <property type="match status" value="1"/>
</dbReference>
<gene>
    <name type="primary">WNK3</name>
    <name type="ordered locus">Os07g0185000</name>
    <name type="ordered locus">LOC_Os07g08750</name>
    <name type="ORF">OJ1046_F10.129-1</name>
</gene>
<feature type="chain" id="PRO_0000351673" description="Probable serine/threonine-protein kinase WNK3">
    <location>
        <begin position="1"/>
        <end position="601"/>
    </location>
</feature>
<feature type="domain" description="Protein kinase" evidence="3">
    <location>
        <begin position="34"/>
        <end position="291"/>
    </location>
</feature>
<feature type="region of interest" description="Disordered" evidence="4">
    <location>
        <begin position="470"/>
        <end position="498"/>
    </location>
</feature>
<feature type="region of interest" description="Disordered" evidence="4">
    <location>
        <begin position="551"/>
        <end position="601"/>
    </location>
</feature>
<feature type="compositionally biased region" description="Acidic residues" evidence="4">
    <location>
        <begin position="477"/>
        <end position="493"/>
    </location>
</feature>
<feature type="compositionally biased region" description="Polar residues" evidence="4">
    <location>
        <begin position="560"/>
        <end position="571"/>
    </location>
</feature>
<feature type="compositionally biased region" description="Basic and acidic residues" evidence="4">
    <location>
        <begin position="572"/>
        <end position="583"/>
    </location>
</feature>
<feature type="active site" description="Proton acceptor" evidence="2">
    <location>
        <position position="181"/>
    </location>
</feature>
<feature type="binding site" evidence="1">
    <location>
        <begin position="114"/>
        <end position="117"/>
    </location>
    <ligand>
        <name>ATP</name>
        <dbReference type="ChEBI" id="CHEBI:30616"/>
    </ligand>
</feature>
<feature type="binding site" evidence="1">
    <location>
        <position position="164"/>
    </location>
    <ligand>
        <name>ATP</name>
        <dbReference type="ChEBI" id="CHEBI:30616"/>
    </ligand>
</feature>
<protein>
    <recommendedName>
        <fullName>Probable serine/threonine-protein kinase WNK3</fullName>
        <shortName>OsWNK3</shortName>
        <ecNumber>2.7.11.1</ecNumber>
    </recommendedName>
    <alternativeName>
        <fullName>Protein kinase with no lysine 3</fullName>
    </alternativeName>
</protein>
<organism>
    <name type="scientific">Oryza sativa subsp. japonica</name>
    <name type="common">Rice</name>
    <dbReference type="NCBI Taxonomy" id="39947"/>
    <lineage>
        <taxon>Eukaryota</taxon>
        <taxon>Viridiplantae</taxon>
        <taxon>Streptophyta</taxon>
        <taxon>Embryophyta</taxon>
        <taxon>Tracheophyta</taxon>
        <taxon>Spermatophyta</taxon>
        <taxon>Magnoliopsida</taxon>
        <taxon>Liliopsida</taxon>
        <taxon>Poales</taxon>
        <taxon>Poaceae</taxon>
        <taxon>BOP clade</taxon>
        <taxon>Oryzoideae</taxon>
        <taxon>Oryzeae</taxon>
        <taxon>Oryzinae</taxon>
        <taxon>Oryza</taxon>
        <taxon>Oryza sativa</taxon>
    </lineage>
</organism>
<name>WNK3_ORYSJ</name>
<evidence type="ECO:0000250" key="1">
    <source>
        <dbReference type="UniProtKB" id="Q9H4A3"/>
    </source>
</evidence>
<evidence type="ECO:0000250" key="2">
    <source>
        <dbReference type="UniProtKB" id="Q9JIH7"/>
    </source>
</evidence>
<evidence type="ECO:0000255" key="3">
    <source>
        <dbReference type="PROSITE-ProRule" id="PRU00159"/>
    </source>
</evidence>
<evidence type="ECO:0000256" key="4">
    <source>
        <dbReference type="SAM" id="MobiDB-lite"/>
    </source>
</evidence>
<evidence type="ECO:0000305" key="5"/>
<proteinExistence type="evidence at transcript level"/>
<sequence length="601" mass="65438">MMGALQQQSNGHGHGVLLLAEAGYAEVDPTGRYGRFNEILGKGSSKIVYRGFDEWRGVEVAWNQVRLRDVVRGGGELERFYGEVHLLAALRHRGIVRLHAYWVDAPRRALNFVTELFVSGTLRQYRERHRRVSAAAVRRWCAQILDGLAYLHAHSPPIIHRDLKCDNIFVNGNQGEVKIGDLGLAAFRRGGGHARCVGTPEFMAPEVYDESYDELADVYSFGMCVLEMVTLDYPYSECSNPIQIYKRVISGIKPAALYRVSDPVVRQFIERCLAPAARRPAARELLDDPFLLPLEDDGFFSGDGGDGHGGFGVGYYNLMYNYLHQPACIDDHHACSNGGLSPSNSVGDNDVDAAVQRGDDDGDNWLRDIHMLFDEDDDDAAAADANERVGGVDITIKGRRTDDGGVYLGLRIADKNGTGRGRIICFRFDTEADTAMTVAAEMVAELDITDHEVTRIAQLIDGKVAALVPGWRPGPATDDDDDDDLVGGGDDPDAPGGAAAACCKNCRPAASSSSSCGSLVDFMSSAAAAERHGCRRCAELHGRFEEITFQADDDEEEQHLQGSSSDTGGSNHEQHAMGKDKEVMNINGIAQDGTVQGSEQP</sequence>
<reference key="1">
    <citation type="journal article" date="2005" name="Nature">
        <title>The map-based sequence of the rice genome.</title>
        <authorList>
            <consortium name="International rice genome sequencing project (IRGSP)"/>
        </authorList>
    </citation>
    <scope>NUCLEOTIDE SEQUENCE [LARGE SCALE GENOMIC DNA]</scope>
    <source>
        <strain>cv. Nipponbare</strain>
    </source>
</reference>
<reference key="2">
    <citation type="journal article" date="2008" name="Nucleic Acids Res.">
        <title>The rice annotation project database (RAP-DB): 2008 update.</title>
        <authorList>
            <consortium name="The rice annotation project (RAP)"/>
        </authorList>
    </citation>
    <scope>GENOME REANNOTATION</scope>
    <source>
        <strain>cv. Nipponbare</strain>
    </source>
</reference>
<reference key="3">
    <citation type="journal article" date="2013" name="Rice">
        <title>Improvement of the Oryza sativa Nipponbare reference genome using next generation sequence and optical map data.</title>
        <authorList>
            <person name="Kawahara Y."/>
            <person name="de la Bastide M."/>
            <person name="Hamilton J.P."/>
            <person name="Kanamori H."/>
            <person name="McCombie W.R."/>
            <person name="Ouyang S."/>
            <person name="Schwartz D.C."/>
            <person name="Tanaka T."/>
            <person name="Wu J."/>
            <person name="Zhou S."/>
            <person name="Childs K.L."/>
            <person name="Davidson R.M."/>
            <person name="Lin H."/>
            <person name="Quesada-Ocampo L."/>
            <person name="Vaillancourt B."/>
            <person name="Sakai H."/>
            <person name="Lee S.S."/>
            <person name="Kim J."/>
            <person name="Numa H."/>
            <person name="Itoh T."/>
            <person name="Buell C.R."/>
            <person name="Matsumoto T."/>
        </authorList>
    </citation>
    <scope>GENOME REANNOTATION</scope>
    <source>
        <strain>cv. Nipponbare</strain>
    </source>
</reference>
<reference key="4">
    <citation type="journal article" date="2003" name="Science">
        <title>Collection, mapping, and annotation of over 28,000 cDNA clones from japonica rice.</title>
        <authorList>
            <consortium name="The rice full-length cDNA consortium"/>
        </authorList>
    </citation>
    <scope>NUCLEOTIDE SEQUENCE [LARGE SCALE MRNA]</scope>
    <source>
        <strain>cv. Nipponbare</strain>
    </source>
</reference>